<keyword id="KW-0119">Carbohydrate metabolism</keyword>
<keyword id="KW-0378">Hydrolase</keyword>
<keyword id="KW-1185">Reference proteome</keyword>
<gene>
    <name evidence="1" type="primary">nagB</name>
    <name type="ordered locus">SPy_1399</name>
    <name type="ordered locus">M5005_Spy1139</name>
</gene>
<proteinExistence type="inferred from homology"/>
<sequence>MKIIRVQDQIEGGKIAFTLLKDSLAKGAKTLGLATGSSPISFYQEMVKSPLDFSDLTSINLDEYVGLSVESDQSYDYFMRQNLFNAKPFKKNYLPNGLATDVEAEAKRYNQIIAEHPIDFQVLGIGRNGHIGFNEPGTSFEEETHVVDLQESTIEANSRFFTSIEDVPKQAISMGIASIMKSEMIVLLAFGQEKADAIKGMVFGPITEHLPASILQKHDHVIVIVDEAAASQLD</sequence>
<name>NAGB_STRP1</name>
<organism>
    <name type="scientific">Streptococcus pyogenes serotype M1</name>
    <dbReference type="NCBI Taxonomy" id="301447"/>
    <lineage>
        <taxon>Bacteria</taxon>
        <taxon>Bacillati</taxon>
        <taxon>Bacillota</taxon>
        <taxon>Bacilli</taxon>
        <taxon>Lactobacillales</taxon>
        <taxon>Streptococcaceae</taxon>
        <taxon>Streptococcus</taxon>
    </lineage>
</organism>
<comment type="function">
    <text evidence="1">Catalyzes the reversible isomerization-deamination of glucosamine 6-phosphate (GlcN6P) to form fructose 6-phosphate (Fru6P) and ammonium ion.</text>
</comment>
<comment type="catalytic activity">
    <reaction evidence="1">
        <text>alpha-D-glucosamine 6-phosphate + H2O = beta-D-fructose 6-phosphate + NH4(+)</text>
        <dbReference type="Rhea" id="RHEA:12172"/>
        <dbReference type="ChEBI" id="CHEBI:15377"/>
        <dbReference type="ChEBI" id="CHEBI:28938"/>
        <dbReference type="ChEBI" id="CHEBI:57634"/>
        <dbReference type="ChEBI" id="CHEBI:75989"/>
        <dbReference type="EC" id="3.5.99.6"/>
    </reaction>
</comment>
<comment type="pathway">
    <text evidence="1">Amino-sugar metabolism; N-acetylneuraminate degradation; D-fructose 6-phosphate from N-acetylneuraminate: step 5/5.</text>
</comment>
<comment type="similarity">
    <text evidence="1">Belongs to the glucosamine/galactosamine-6-phosphate isomerase family. NagB subfamily.</text>
</comment>
<feature type="chain" id="PRO_0000160179" description="Glucosamine-6-phosphate deaminase">
    <location>
        <begin position="1"/>
        <end position="234"/>
    </location>
</feature>
<feature type="active site" description="Proton acceptor; for enolization step" evidence="1">
    <location>
        <position position="62"/>
    </location>
</feature>
<feature type="active site" description="For ring-opening step" evidence="1">
    <location>
        <position position="128"/>
    </location>
</feature>
<feature type="active site" description="Proton acceptor; for ring-opening step" evidence="1">
    <location>
        <position position="130"/>
    </location>
</feature>
<feature type="active site" description="For ring-opening step" evidence="1">
    <location>
        <position position="135"/>
    </location>
</feature>
<accession>Q99Z50</accession>
<accession>Q48Y18</accession>
<evidence type="ECO:0000255" key="1">
    <source>
        <dbReference type="HAMAP-Rule" id="MF_01241"/>
    </source>
</evidence>
<protein>
    <recommendedName>
        <fullName evidence="1">Glucosamine-6-phosphate deaminase</fullName>
        <ecNumber evidence="1">3.5.99.6</ecNumber>
    </recommendedName>
    <alternativeName>
        <fullName evidence="1">GlcN6P deaminase</fullName>
        <shortName evidence="1">GNPDA</shortName>
    </alternativeName>
    <alternativeName>
        <fullName evidence="1">Glucosamine-6-phosphate isomerase</fullName>
    </alternativeName>
</protein>
<reference key="1">
    <citation type="journal article" date="2001" name="Proc. Natl. Acad. Sci. U.S.A.">
        <title>Complete genome sequence of an M1 strain of Streptococcus pyogenes.</title>
        <authorList>
            <person name="Ferretti J.J."/>
            <person name="McShan W.M."/>
            <person name="Ajdic D.J."/>
            <person name="Savic D.J."/>
            <person name="Savic G."/>
            <person name="Lyon K."/>
            <person name="Primeaux C."/>
            <person name="Sezate S."/>
            <person name="Suvorov A.N."/>
            <person name="Kenton S."/>
            <person name="Lai H.S."/>
            <person name="Lin S.P."/>
            <person name="Qian Y."/>
            <person name="Jia H.G."/>
            <person name="Najar F.Z."/>
            <person name="Ren Q."/>
            <person name="Zhu H."/>
            <person name="Song L."/>
            <person name="White J."/>
            <person name="Yuan X."/>
            <person name="Clifton S.W."/>
            <person name="Roe B.A."/>
            <person name="McLaughlin R.E."/>
        </authorList>
    </citation>
    <scope>NUCLEOTIDE SEQUENCE [LARGE SCALE GENOMIC DNA]</scope>
    <source>
        <strain>ATCC 700294 / SF370 / Serotype M1</strain>
    </source>
</reference>
<reference key="2">
    <citation type="journal article" date="2005" name="J. Infect. Dis.">
        <title>Evolutionary origin and emergence of a highly successful clone of serotype M1 group A Streptococcus involved multiple horizontal gene transfer events.</title>
        <authorList>
            <person name="Sumby P."/>
            <person name="Porcella S.F."/>
            <person name="Madrigal A.G."/>
            <person name="Barbian K.D."/>
            <person name="Virtaneva K."/>
            <person name="Ricklefs S.M."/>
            <person name="Sturdevant D.E."/>
            <person name="Graham M.R."/>
            <person name="Vuopio-Varkila J."/>
            <person name="Hoe N.P."/>
            <person name="Musser J.M."/>
        </authorList>
    </citation>
    <scope>NUCLEOTIDE SEQUENCE [LARGE SCALE GENOMIC DNA]</scope>
    <source>
        <strain>ATCC BAA-947 / MGAS5005 / Serotype M1</strain>
    </source>
</reference>
<dbReference type="EC" id="3.5.99.6" evidence="1"/>
<dbReference type="EMBL" id="AE004092">
    <property type="protein sequence ID" value="AAK34215.1"/>
    <property type="molecule type" value="Genomic_DNA"/>
</dbReference>
<dbReference type="EMBL" id="CP000017">
    <property type="protein sequence ID" value="AAZ51757.1"/>
    <property type="molecule type" value="Genomic_DNA"/>
</dbReference>
<dbReference type="RefSeq" id="NP_269494.1">
    <property type="nucleotide sequence ID" value="NC_002737.2"/>
</dbReference>
<dbReference type="SMR" id="Q99Z50"/>
<dbReference type="PaxDb" id="1314-HKU360_01175"/>
<dbReference type="KEGG" id="spy:SPy_1399"/>
<dbReference type="KEGG" id="spz:M5005_Spy1139"/>
<dbReference type="PATRIC" id="fig|160490.10.peg.1219"/>
<dbReference type="HOGENOM" id="CLU_049611_1_0_9"/>
<dbReference type="OMA" id="HVITQGI"/>
<dbReference type="UniPathway" id="UPA00629">
    <property type="reaction ID" value="UER00684"/>
</dbReference>
<dbReference type="Proteomes" id="UP000000750">
    <property type="component" value="Chromosome"/>
</dbReference>
<dbReference type="GO" id="GO:0005737">
    <property type="term" value="C:cytoplasm"/>
    <property type="evidence" value="ECO:0007669"/>
    <property type="project" value="TreeGrafter"/>
</dbReference>
<dbReference type="GO" id="GO:0004342">
    <property type="term" value="F:glucosamine-6-phosphate deaminase activity"/>
    <property type="evidence" value="ECO:0007669"/>
    <property type="project" value="UniProtKB-UniRule"/>
</dbReference>
<dbReference type="GO" id="GO:0042802">
    <property type="term" value="F:identical protein binding"/>
    <property type="evidence" value="ECO:0007669"/>
    <property type="project" value="TreeGrafter"/>
</dbReference>
<dbReference type="GO" id="GO:0005975">
    <property type="term" value="P:carbohydrate metabolic process"/>
    <property type="evidence" value="ECO:0007669"/>
    <property type="project" value="InterPro"/>
</dbReference>
<dbReference type="GO" id="GO:0006043">
    <property type="term" value="P:glucosamine catabolic process"/>
    <property type="evidence" value="ECO:0007669"/>
    <property type="project" value="TreeGrafter"/>
</dbReference>
<dbReference type="GO" id="GO:0006046">
    <property type="term" value="P:N-acetylglucosamine catabolic process"/>
    <property type="evidence" value="ECO:0007669"/>
    <property type="project" value="TreeGrafter"/>
</dbReference>
<dbReference type="GO" id="GO:0019262">
    <property type="term" value="P:N-acetylneuraminate catabolic process"/>
    <property type="evidence" value="ECO:0007669"/>
    <property type="project" value="UniProtKB-UniRule"/>
</dbReference>
<dbReference type="CDD" id="cd01399">
    <property type="entry name" value="GlcN6P_deaminase"/>
    <property type="match status" value="1"/>
</dbReference>
<dbReference type="FunFam" id="3.40.50.1360:FF:000003">
    <property type="entry name" value="Glucosamine-6-phosphate deaminase"/>
    <property type="match status" value="1"/>
</dbReference>
<dbReference type="Gene3D" id="3.40.50.1360">
    <property type="match status" value="1"/>
</dbReference>
<dbReference type="HAMAP" id="MF_01241">
    <property type="entry name" value="GlcN6P_deamin"/>
    <property type="match status" value="1"/>
</dbReference>
<dbReference type="InterPro" id="IPR006148">
    <property type="entry name" value="Glc/Gal-6P_isomerase"/>
</dbReference>
<dbReference type="InterPro" id="IPR004547">
    <property type="entry name" value="Glucosamine6P_isomerase"/>
</dbReference>
<dbReference type="InterPro" id="IPR018321">
    <property type="entry name" value="Glucosamine6P_isomerase_CS"/>
</dbReference>
<dbReference type="InterPro" id="IPR037171">
    <property type="entry name" value="NagB/RpiA_transferase-like"/>
</dbReference>
<dbReference type="NCBIfam" id="TIGR00502">
    <property type="entry name" value="nagB"/>
    <property type="match status" value="1"/>
</dbReference>
<dbReference type="PANTHER" id="PTHR11280">
    <property type="entry name" value="GLUCOSAMINE-6-PHOSPHATE ISOMERASE"/>
    <property type="match status" value="1"/>
</dbReference>
<dbReference type="PANTHER" id="PTHR11280:SF5">
    <property type="entry name" value="GLUCOSAMINE-6-PHOSPHATE ISOMERASE"/>
    <property type="match status" value="1"/>
</dbReference>
<dbReference type="Pfam" id="PF01182">
    <property type="entry name" value="Glucosamine_iso"/>
    <property type="match status" value="1"/>
</dbReference>
<dbReference type="SUPFAM" id="SSF100950">
    <property type="entry name" value="NagB/RpiA/CoA transferase-like"/>
    <property type="match status" value="1"/>
</dbReference>
<dbReference type="PROSITE" id="PS01161">
    <property type="entry name" value="GLC_GALNAC_ISOMERASE"/>
    <property type="match status" value="1"/>
</dbReference>